<dbReference type="EMBL" id="AE008384">
    <property type="protein sequence ID" value="AAM30285.1"/>
    <property type="molecule type" value="Genomic_DNA"/>
</dbReference>
<dbReference type="RefSeq" id="WP_011032540.1">
    <property type="nucleotide sequence ID" value="NC_003901.1"/>
</dbReference>
<dbReference type="KEGG" id="mma:MM_0589"/>
<dbReference type="PATRIC" id="fig|192952.21.peg.693"/>
<dbReference type="eggNOG" id="arCOG04477">
    <property type="taxonomic scope" value="Archaea"/>
</dbReference>
<dbReference type="HOGENOM" id="CLU_121764_0_0_2"/>
<dbReference type="Proteomes" id="UP000000595">
    <property type="component" value="Chromosome"/>
</dbReference>
<dbReference type="HAMAP" id="MF_00498">
    <property type="entry name" value="UPF0179"/>
    <property type="match status" value="1"/>
</dbReference>
<dbReference type="InterPro" id="IPR005369">
    <property type="entry name" value="UPF0179"/>
</dbReference>
<dbReference type="PANTHER" id="PTHR40699">
    <property type="entry name" value="UPF0179 PROTEIN MJ1627"/>
    <property type="match status" value="1"/>
</dbReference>
<dbReference type="PANTHER" id="PTHR40699:SF1">
    <property type="entry name" value="UPF0179 PROTEIN MJ1627"/>
    <property type="match status" value="1"/>
</dbReference>
<dbReference type="Pfam" id="PF03684">
    <property type="entry name" value="UPF0179"/>
    <property type="match status" value="1"/>
</dbReference>
<dbReference type="PIRSF" id="PIRSF006595">
    <property type="entry name" value="UCP006595"/>
    <property type="match status" value="1"/>
</dbReference>
<proteinExistence type="inferred from homology"/>
<gene>
    <name type="ordered locus">MM_0589</name>
</gene>
<protein>
    <recommendedName>
        <fullName evidence="1">UPF0179 protein MM_0589</fullName>
    </recommendedName>
</protein>
<accession>Q8PZA5</accession>
<evidence type="ECO:0000255" key="1">
    <source>
        <dbReference type="HAMAP-Rule" id="MF_00498"/>
    </source>
</evidence>
<name>Y589_METMA</name>
<reference key="1">
    <citation type="journal article" date="2002" name="J. Mol. Microbiol. Biotechnol.">
        <title>The genome of Methanosarcina mazei: evidence for lateral gene transfer between Bacteria and Archaea.</title>
        <authorList>
            <person name="Deppenmeier U."/>
            <person name="Johann A."/>
            <person name="Hartsch T."/>
            <person name="Merkl R."/>
            <person name="Schmitz R.A."/>
            <person name="Martinez-Arias R."/>
            <person name="Henne A."/>
            <person name="Wiezer A."/>
            <person name="Baeumer S."/>
            <person name="Jacobi C."/>
            <person name="Brueggemann H."/>
            <person name="Lienard T."/>
            <person name="Christmann A."/>
            <person name="Boemecke M."/>
            <person name="Steckel S."/>
            <person name="Bhattacharyya A."/>
            <person name="Lykidis A."/>
            <person name="Overbeek R."/>
            <person name="Klenk H.-P."/>
            <person name="Gunsalus R.P."/>
            <person name="Fritz H.-J."/>
            <person name="Gottschalk G."/>
        </authorList>
    </citation>
    <scope>NUCLEOTIDE SEQUENCE [LARGE SCALE GENOMIC DNA]</scope>
    <source>
        <strain>ATCC BAA-159 / DSM 3647 / Goe1 / Go1 / JCM 11833 / OCM 88</strain>
    </source>
</reference>
<organism>
    <name type="scientific">Methanosarcina mazei (strain ATCC BAA-159 / DSM 3647 / Goe1 / Go1 / JCM 11833 / OCM 88)</name>
    <name type="common">Methanosarcina frisia</name>
    <dbReference type="NCBI Taxonomy" id="192952"/>
    <lineage>
        <taxon>Archaea</taxon>
        <taxon>Methanobacteriati</taxon>
        <taxon>Methanobacteriota</taxon>
        <taxon>Stenosarchaea group</taxon>
        <taxon>Methanomicrobia</taxon>
        <taxon>Methanosarcinales</taxon>
        <taxon>Methanosarcinaceae</taxon>
        <taxon>Methanosarcina</taxon>
    </lineage>
</organism>
<sequence>MTESDTKITLIGSRLAREGLEFIFKGEMPECKKCRLKNTCLNLEPGRRYKVVRIKSNDIHECFLHDSGVLAVDVSRAPITTSVESRKAVQGAKIMYEPAKCGKRECAEYETCHPEGLIKGDKCKIVEVLESLDSKCEAGISLKKVKLAW</sequence>
<feature type="chain" id="PRO_0000378129" description="UPF0179 protein MM_0589">
    <location>
        <begin position="1"/>
        <end position="149"/>
    </location>
</feature>
<comment type="similarity">
    <text evidence="1">Belongs to the UPF0179 family.</text>
</comment>